<feature type="chain" id="PRO_0000349409" description="HTH-type transcriptional regulator ArcR">
    <location>
        <begin position="1"/>
        <end position="234"/>
    </location>
</feature>
<feature type="domain" description="HTH crp-type">
    <location>
        <begin position="155"/>
        <end position="228"/>
    </location>
</feature>
<feature type="DNA-binding region" description="H-T-H motif" evidence="1">
    <location>
        <begin position="188"/>
        <end position="207"/>
    </location>
</feature>
<feature type="binding site">
    <location>
        <begin position="40"/>
        <end position="129"/>
    </location>
    <ligand>
        <name>a nucleoside 3',5'-cyclic phosphate</name>
        <dbReference type="ChEBI" id="CHEBI:58464"/>
    </ligand>
</feature>
<sequence>MTENFILGRNNKLEHELKALADYINIPYSILQPYQSECFVRHYTKGQVIYFSPQESSNIYFLIEGNIIREHYNQNGDVYRYFNKEQVLFPISNLFHPKEVNELCTALTDCTVLGLPRELMAFLCKANDDIFLTLFALINDNEQQHMNYNMALTSKFAKDRIIKLFCHLCQTVGYDQDEFYEIKQFLTIQLMSDMAGISRETAGHIIHELKDEKLVVKDHKNWLVSKHLFNDVCV</sequence>
<proteinExistence type="inferred from homology"/>
<comment type="function">
    <text evidence="1">Positively regulates the expression of the arcABDCR operon under anaerobic conditions, thus playing an essential role in arginine catabolism. May also control the expression of genes encoding proteins which are involved in anaerobic metabolism. Can bind cyclic AMP (By similarity).</text>
</comment>
<comment type="subcellular location">
    <subcellularLocation>
        <location evidence="1">Cytoplasm</location>
    </subcellularLocation>
</comment>
<accession>Q6G643</accession>
<protein>
    <recommendedName>
        <fullName>HTH-type transcriptional regulator ArcR</fullName>
    </recommendedName>
</protein>
<reference key="1">
    <citation type="journal article" date="2004" name="Proc. Natl. Acad. Sci. U.S.A.">
        <title>Complete genomes of two clinical Staphylococcus aureus strains: evidence for the rapid evolution of virulence and drug resistance.</title>
        <authorList>
            <person name="Holden M.T.G."/>
            <person name="Feil E.J."/>
            <person name="Lindsay J.A."/>
            <person name="Peacock S.J."/>
            <person name="Day N.P.J."/>
            <person name="Enright M.C."/>
            <person name="Foster T.J."/>
            <person name="Moore C.E."/>
            <person name="Hurst L."/>
            <person name="Atkin R."/>
            <person name="Barron A."/>
            <person name="Bason N."/>
            <person name="Bentley S.D."/>
            <person name="Chillingworth C."/>
            <person name="Chillingworth T."/>
            <person name="Churcher C."/>
            <person name="Clark L."/>
            <person name="Corton C."/>
            <person name="Cronin A."/>
            <person name="Doggett J."/>
            <person name="Dowd L."/>
            <person name="Feltwell T."/>
            <person name="Hance Z."/>
            <person name="Harris B."/>
            <person name="Hauser H."/>
            <person name="Holroyd S."/>
            <person name="Jagels K."/>
            <person name="James K.D."/>
            <person name="Lennard N."/>
            <person name="Line A."/>
            <person name="Mayes R."/>
            <person name="Moule S."/>
            <person name="Mungall K."/>
            <person name="Ormond D."/>
            <person name="Quail M.A."/>
            <person name="Rabbinowitsch E."/>
            <person name="Rutherford K.M."/>
            <person name="Sanders M."/>
            <person name="Sharp S."/>
            <person name="Simmonds M."/>
            <person name="Stevens K."/>
            <person name="Whitehead S."/>
            <person name="Barrell B.G."/>
            <person name="Spratt B.G."/>
            <person name="Parkhill J."/>
        </authorList>
    </citation>
    <scope>NUCLEOTIDE SEQUENCE [LARGE SCALE GENOMIC DNA]</scope>
    <source>
        <strain>MSSA476</strain>
    </source>
</reference>
<name>ARCR_STAAS</name>
<keyword id="KW-0010">Activator</keyword>
<keyword id="KW-0114">cAMP</keyword>
<keyword id="KW-0116">cAMP-binding</keyword>
<keyword id="KW-0963">Cytoplasm</keyword>
<keyword id="KW-0238">DNA-binding</keyword>
<keyword id="KW-0547">Nucleotide-binding</keyword>
<keyword id="KW-0804">Transcription</keyword>
<keyword id="KW-0805">Transcription regulation</keyword>
<gene>
    <name type="primary">arcR</name>
    <name type="ordered locus">SAS2517</name>
</gene>
<evidence type="ECO:0000250" key="1"/>
<dbReference type="EMBL" id="BX571857">
    <property type="protein sequence ID" value="CAG44334.1"/>
    <property type="molecule type" value="Genomic_DNA"/>
</dbReference>
<dbReference type="RefSeq" id="WP_000138213.1">
    <property type="nucleotide sequence ID" value="NC_002953.3"/>
</dbReference>
<dbReference type="SMR" id="Q6G643"/>
<dbReference type="KEGG" id="sas:SAS2517"/>
<dbReference type="HOGENOM" id="CLU_1160528_0_0_9"/>
<dbReference type="GO" id="GO:0005737">
    <property type="term" value="C:cytoplasm"/>
    <property type="evidence" value="ECO:0007669"/>
    <property type="project" value="UniProtKB-SubCell"/>
</dbReference>
<dbReference type="GO" id="GO:0030552">
    <property type="term" value="F:cAMP binding"/>
    <property type="evidence" value="ECO:0007669"/>
    <property type="project" value="UniProtKB-KW"/>
</dbReference>
<dbReference type="GO" id="GO:0003677">
    <property type="term" value="F:DNA binding"/>
    <property type="evidence" value="ECO:0007669"/>
    <property type="project" value="UniProtKB-KW"/>
</dbReference>
<dbReference type="Gene3D" id="2.60.120.10">
    <property type="entry name" value="Jelly Rolls"/>
    <property type="match status" value="1"/>
</dbReference>
<dbReference type="Gene3D" id="1.10.10.10">
    <property type="entry name" value="Winged helix-like DNA-binding domain superfamily/Winged helix DNA-binding domain"/>
    <property type="match status" value="1"/>
</dbReference>
<dbReference type="InterPro" id="IPR000595">
    <property type="entry name" value="cNMP-bd_dom"/>
</dbReference>
<dbReference type="InterPro" id="IPR018490">
    <property type="entry name" value="cNMP-bd_dom_sf"/>
</dbReference>
<dbReference type="InterPro" id="IPR014710">
    <property type="entry name" value="RmlC-like_jellyroll"/>
</dbReference>
<dbReference type="InterPro" id="IPR036388">
    <property type="entry name" value="WH-like_DNA-bd_sf"/>
</dbReference>
<dbReference type="InterPro" id="IPR036390">
    <property type="entry name" value="WH_DNA-bd_sf"/>
</dbReference>
<dbReference type="Pfam" id="PF00027">
    <property type="entry name" value="cNMP_binding"/>
    <property type="match status" value="1"/>
</dbReference>
<dbReference type="SUPFAM" id="SSF51206">
    <property type="entry name" value="cAMP-binding domain-like"/>
    <property type="match status" value="1"/>
</dbReference>
<dbReference type="SUPFAM" id="SSF46785">
    <property type="entry name" value="Winged helix' DNA-binding domain"/>
    <property type="match status" value="1"/>
</dbReference>
<organism>
    <name type="scientific">Staphylococcus aureus (strain MSSA476)</name>
    <dbReference type="NCBI Taxonomy" id="282459"/>
    <lineage>
        <taxon>Bacteria</taxon>
        <taxon>Bacillati</taxon>
        <taxon>Bacillota</taxon>
        <taxon>Bacilli</taxon>
        <taxon>Bacillales</taxon>
        <taxon>Staphylococcaceae</taxon>
        <taxon>Staphylococcus</taxon>
    </lineage>
</organism>